<reference key="1">
    <citation type="journal article" date="2004" name="Proc. Natl. Acad. Sci. U.S.A.">
        <title>Complete genomes of two clinical Staphylococcus aureus strains: evidence for the rapid evolution of virulence and drug resistance.</title>
        <authorList>
            <person name="Holden M.T.G."/>
            <person name="Feil E.J."/>
            <person name="Lindsay J.A."/>
            <person name="Peacock S.J."/>
            <person name="Day N.P.J."/>
            <person name="Enright M.C."/>
            <person name="Foster T.J."/>
            <person name="Moore C.E."/>
            <person name="Hurst L."/>
            <person name="Atkin R."/>
            <person name="Barron A."/>
            <person name="Bason N."/>
            <person name="Bentley S.D."/>
            <person name="Chillingworth C."/>
            <person name="Chillingworth T."/>
            <person name="Churcher C."/>
            <person name="Clark L."/>
            <person name="Corton C."/>
            <person name="Cronin A."/>
            <person name="Doggett J."/>
            <person name="Dowd L."/>
            <person name="Feltwell T."/>
            <person name="Hance Z."/>
            <person name="Harris B."/>
            <person name="Hauser H."/>
            <person name="Holroyd S."/>
            <person name="Jagels K."/>
            <person name="James K.D."/>
            <person name="Lennard N."/>
            <person name="Line A."/>
            <person name="Mayes R."/>
            <person name="Moule S."/>
            <person name="Mungall K."/>
            <person name="Ormond D."/>
            <person name="Quail M.A."/>
            <person name="Rabbinowitsch E."/>
            <person name="Rutherford K.M."/>
            <person name="Sanders M."/>
            <person name="Sharp S."/>
            <person name="Simmonds M."/>
            <person name="Stevens K."/>
            <person name="Whitehead S."/>
            <person name="Barrell B.G."/>
            <person name="Spratt B.G."/>
            <person name="Parkhill J."/>
        </authorList>
    </citation>
    <scope>NUCLEOTIDE SEQUENCE [LARGE SCALE GENOMIC DNA]</scope>
    <source>
        <strain>MSSA476</strain>
    </source>
</reference>
<comment type="function">
    <text evidence="1">Participates in chromosomal partition during cell division. May act via the formation of a condensin-like complex containing Smc and ScpB that pull DNA away from mid-cell into both cell halves.</text>
</comment>
<comment type="subunit">
    <text evidence="1">Component of a cohesin-like complex composed of ScpA, ScpB and the Smc homodimer, in which ScpA and ScpB bind to the head domain of Smc. The presence of the three proteins is required for the association of the complex with DNA.</text>
</comment>
<comment type="subcellular location">
    <subcellularLocation>
        <location evidence="1">Cytoplasm</location>
    </subcellularLocation>
    <text evidence="1">Associated with two foci at the outer edges of the nucleoid region in young cells, and at four foci within both cell halves in older cells.</text>
</comment>
<comment type="similarity">
    <text evidence="1">Belongs to the ScpA family.</text>
</comment>
<comment type="sequence caution" evidence="2">
    <conflict type="erroneous initiation">
        <sequence resource="EMBL-CDS" id="CAG43212"/>
    </conflict>
</comment>
<sequence>MYEVKLDAFNGPLDLLLHLIQKFEIDIYDIPMQALTEQYMQYVHAMKQLEINIASEYLVLASELLMIKSKMLLPQSTSDMDVDDDPREDLVGRLIEYQNYKEYTAILNDMKEERDFYFTKRPTDLSHLETDESWDPNHTIDLTELIVAYQRVKNRVELNTPKSVEIRKETFTIQQATEQVTSRLKDKDHFNFFSLFTFSEPIEQVVTHFLAILEMSKAGIINIEQQRNFEDINIIRGVNYHFG</sequence>
<protein>
    <recommendedName>
        <fullName evidence="1">Segregation and condensation protein A</fullName>
    </recommendedName>
</protein>
<feature type="chain" id="PRO_0000211104" description="Segregation and condensation protein A">
    <location>
        <begin position="1"/>
        <end position="243"/>
    </location>
</feature>
<keyword id="KW-0131">Cell cycle</keyword>
<keyword id="KW-0132">Cell division</keyword>
<keyword id="KW-0159">Chromosome partition</keyword>
<keyword id="KW-0963">Cytoplasm</keyword>
<organism>
    <name type="scientific">Staphylococcus aureus (strain MSSA476)</name>
    <dbReference type="NCBI Taxonomy" id="282459"/>
    <lineage>
        <taxon>Bacteria</taxon>
        <taxon>Bacillati</taxon>
        <taxon>Bacillota</taxon>
        <taxon>Bacilli</taxon>
        <taxon>Bacillales</taxon>
        <taxon>Staphylococcaceae</taxon>
        <taxon>Staphylococcus</taxon>
    </lineage>
</organism>
<accession>Q6G969</accession>
<proteinExistence type="inferred from homology"/>
<evidence type="ECO:0000255" key="1">
    <source>
        <dbReference type="HAMAP-Rule" id="MF_01805"/>
    </source>
</evidence>
<evidence type="ECO:0000305" key="2"/>
<name>SCPA_STAAS</name>
<dbReference type="EMBL" id="BX571857">
    <property type="protein sequence ID" value="CAG43212.1"/>
    <property type="status" value="ALT_INIT"/>
    <property type="molecule type" value="Genomic_DNA"/>
</dbReference>
<dbReference type="RefSeq" id="WP_000273371.1">
    <property type="nucleotide sequence ID" value="NC_002953.3"/>
</dbReference>
<dbReference type="SMR" id="Q6G969"/>
<dbReference type="KEGG" id="sas:SAS1435"/>
<dbReference type="HOGENOM" id="CLU_038686_3_1_9"/>
<dbReference type="GO" id="GO:0005737">
    <property type="term" value="C:cytoplasm"/>
    <property type="evidence" value="ECO:0007669"/>
    <property type="project" value="UniProtKB-SubCell"/>
</dbReference>
<dbReference type="GO" id="GO:0051301">
    <property type="term" value="P:cell division"/>
    <property type="evidence" value="ECO:0007669"/>
    <property type="project" value="UniProtKB-KW"/>
</dbReference>
<dbReference type="GO" id="GO:0007059">
    <property type="term" value="P:chromosome segregation"/>
    <property type="evidence" value="ECO:0007669"/>
    <property type="project" value="UniProtKB-UniRule"/>
</dbReference>
<dbReference type="GO" id="GO:0006260">
    <property type="term" value="P:DNA replication"/>
    <property type="evidence" value="ECO:0007669"/>
    <property type="project" value="UniProtKB-UniRule"/>
</dbReference>
<dbReference type="Gene3D" id="6.10.250.2410">
    <property type="match status" value="1"/>
</dbReference>
<dbReference type="Gene3D" id="1.10.10.580">
    <property type="entry name" value="Structural maintenance of chromosome 1. Chain E"/>
    <property type="match status" value="1"/>
</dbReference>
<dbReference type="HAMAP" id="MF_01805">
    <property type="entry name" value="ScpA"/>
    <property type="match status" value="1"/>
</dbReference>
<dbReference type="InterPro" id="IPR003768">
    <property type="entry name" value="ScpA"/>
</dbReference>
<dbReference type="InterPro" id="IPR023093">
    <property type="entry name" value="ScpA-like_C"/>
</dbReference>
<dbReference type="PANTHER" id="PTHR33969">
    <property type="entry name" value="SEGREGATION AND CONDENSATION PROTEIN A"/>
    <property type="match status" value="1"/>
</dbReference>
<dbReference type="PANTHER" id="PTHR33969:SF2">
    <property type="entry name" value="SEGREGATION AND CONDENSATION PROTEIN A"/>
    <property type="match status" value="1"/>
</dbReference>
<dbReference type="Pfam" id="PF02616">
    <property type="entry name" value="SMC_ScpA"/>
    <property type="match status" value="1"/>
</dbReference>
<gene>
    <name evidence="1" type="primary">scpA</name>
    <name type="ordered locus">SAS1435</name>
</gene>